<dbReference type="EC" id="2.5.1.7" evidence="1"/>
<dbReference type="EMBL" id="CP001219">
    <property type="protein sequence ID" value="ACK80071.1"/>
    <property type="molecule type" value="Genomic_DNA"/>
</dbReference>
<dbReference type="RefSeq" id="WP_009565749.1">
    <property type="nucleotide sequence ID" value="NC_011761.1"/>
</dbReference>
<dbReference type="SMR" id="B7JA12"/>
<dbReference type="STRING" id="243159.AFE_3039"/>
<dbReference type="PaxDb" id="243159-AFE_3039"/>
<dbReference type="GeneID" id="65282041"/>
<dbReference type="KEGG" id="afr:AFE_3039"/>
<dbReference type="eggNOG" id="COG0766">
    <property type="taxonomic scope" value="Bacteria"/>
</dbReference>
<dbReference type="HOGENOM" id="CLU_027387_0_0_6"/>
<dbReference type="UniPathway" id="UPA00219"/>
<dbReference type="Proteomes" id="UP000001362">
    <property type="component" value="Chromosome"/>
</dbReference>
<dbReference type="GO" id="GO:0005737">
    <property type="term" value="C:cytoplasm"/>
    <property type="evidence" value="ECO:0007669"/>
    <property type="project" value="UniProtKB-SubCell"/>
</dbReference>
<dbReference type="GO" id="GO:0008760">
    <property type="term" value="F:UDP-N-acetylglucosamine 1-carboxyvinyltransferase activity"/>
    <property type="evidence" value="ECO:0007669"/>
    <property type="project" value="UniProtKB-UniRule"/>
</dbReference>
<dbReference type="GO" id="GO:0051301">
    <property type="term" value="P:cell division"/>
    <property type="evidence" value="ECO:0007669"/>
    <property type="project" value="UniProtKB-KW"/>
</dbReference>
<dbReference type="GO" id="GO:0071555">
    <property type="term" value="P:cell wall organization"/>
    <property type="evidence" value="ECO:0007669"/>
    <property type="project" value="UniProtKB-KW"/>
</dbReference>
<dbReference type="GO" id="GO:0009252">
    <property type="term" value="P:peptidoglycan biosynthetic process"/>
    <property type="evidence" value="ECO:0007669"/>
    <property type="project" value="UniProtKB-UniRule"/>
</dbReference>
<dbReference type="GO" id="GO:0008360">
    <property type="term" value="P:regulation of cell shape"/>
    <property type="evidence" value="ECO:0007669"/>
    <property type="project" value="UniProtKB-KW"/>
</dbReference>
<dbReference type="GO" id="GO:0019277">
    <property type="term" value="P:UDP-N-acetylgalactosamine biosynthetic process"/>
    <property type="evidence" value="ECO:0007669"/>
    <property type="project" value="InterPro"/>
</dbReference>
<dbReference type="CDD" id="cd01555">
    <property type="entry name" value="UdpNAET"/>
    <property type="match status" value="1"/>
</dbReference>
<dbReference type="FunFam" id="3.65.10.10:FF:000002">
    <property type="entry name" value="UDP-N-acetylglucosamine 1-carboxyvinyltransferase"/>
    <property type="match status" value="1"/>
</dbReference>
<dbReference type="Gene3D" id="3.65.10.10">
    <property type="entry name" value="Enolpyruvate transferase domain"/>
    <property type="match status" value="2"/>
</dbReference>
<dbReference type="HAMAP" id="MF_00111">
    <property type="entry name" value="MurA"/>
    <property type="match status" value="1"/>
</dbReference>
<dbReference type="InterPro" id="IPR001986">
    <property type="entry name" value="Enolpyruvate_Tfrase_dom"/>
</dbReference>
<dbReference type="InterPro" id="IPR036968">
    <property type="entry name" value="Enolpyruvate_Tfrase_sf"/>
</dbReference>
<dbReference type="InterPro" id="IPR050068">
    <property type="entry name" value="MurA_subfamily"/>
</dbReference>
<dbReference type="InterPro" id="IPR013792">
    <property type="entry name" value="RNA3'P_cycl/enolpyr_Trfase_a/b"/>
</dbReference>
<dbReference type="InterPro" id="IPR005750">
    <property type="entry name" value="UDP_GlcNAc_COvinyl_MurA"/>
</dbReference>
<dbReference type="NCBIfam" id="TIGR01072">
    <property type="entry name" value="murA"/>
    <property type="match status" value="1"/>
</dbReference>
<dbReference type="NCBIfam" id="NF006873">
    <property type="entry name" value="PRK09369.1"/>
    <property type="match status" value="1"/>
</dbReference>
<dbReference type="PANTHER" id="PTHR43783">
    <property type="entry name" value="UDP-N-ACETYLGLUCOSAMINE 1-CARBOXYVINYLTRANSFERASE"/>
    <property type="match status" value="1"/>
</dbReference>
<dbReference type="PANTHER" id="PTHR43783:SF1">
    <property type="entry name" value="UDP-N-ACETYLGLUCOSAMINE 1-CARBOXYVINYLTRANSFERASE"/>
    <property type="match status" value="1"/>
</dbReference>
<dbReference type="Pfam" id="PF00275">
    <property type="entry name" value="EPSP_synthase"/>
    <property type="match status" value="1"/>
</dbReference>
<dbReference type="SUPFAM" id="SSF55205">
    <property type="entry name" value="EPT/RTPC-like"/>
    <property type="match status" value="1"/>
</dbReference>
<keyword id="KW-0131">Cell cycle</keyword>
<keyword id="KW-0132">Cell division</keyword>
<keyword id="KW-0133">Cell shape</keyword>
<keyword id="KW-0961">Cell wall biogenesis/degradation</keyword>
<keyword id="KW-0963">Cytoplasm</keyword>
<keyword id="KW-0573">Peptidoglycan synthesis</keyword>
<keyword id="KW-0670">Pyruvate</keyword>
<keyword id="KW-1185">Reference proteome</keyword>
<keyword id="KW-0808">Transferase</keyword>
<evidence type="ECO:0000255" key="1">
    <source>
        <dbReference type="HAMAP-Rule" id="MF_00111"/>
    </source>
</evidence>
<proteinExistence type="inferred from homology"/>
<gene>
    <name evidence="1" type="primary">murA</name>
    <name type="ordered locus">AFE_3039</name>
</gene>
<accession>B7JA12</accession>
<sequence length="423" mass="44934">MDKLLLRGNGPLRGELRISGAKNAALPCLAATLLAREPVRLCNIPHLRDITTTLELLSTLGARVLVDGQLGIEVDPRPVHSVVAPYELVKTMRASILVLGPLLARHGSAEVSLPGGCAIGSRPVSVHLSGLQALGAEITVEDGFVKAQAARLRGTRIVMEMVSVTGTENLLMAATLAEGRTILENAAREPEIVDLARCLSAMGARISGAGTSVIEIEGVAELHGAEHSVVPDRIETGTYLVAAAMTGGDICLKRTDAGLLESVLLKLKEAGAEVTTGADTIRIRMKRRPRAVDVRTAPFPAFPTDMQAQFMAMNCIAEGSSVVTETIFENRFMHVSELQRLGADINADGKTAVVRGVQRLRGAPVMATDLRASASLVLAGLVAEGETLIDRIYHLDRGYEVIEEKLSALGADIRRISNTRSVA</sequence>
<feature type="chain" id="PRO_1000117501" description="UDP-N-acetylglucosamine 1-carboxyvinyltransferase">
    <location>
        <begin position="1"/>
        <end position="423"/>
    </location>
</feature>
<feature type="active site" description="Proton donor" evidence="1">
    <location>
        <position position="117"/>
    </location>
</feature>
<feature type="binding site" evidence="1">
    <location>
        <begin position="22"/>
        <end position="23"/>
    </location>
    <ligand>
        <name>phosphoenolpyruvate</name>
        <dbReference type="ChEBI" id="CHEBI:58702"/>
    </ligand>
</feature>
<feature type="binding site" evidence="1">
    <location>
        <position position="93"/>
    </location>
    <ligand>
        <name>UDP-N-acetyl-alpha-D-glucosamine</name>
        <dbReference type="ChEBI" id="CHEBI:57705"/>
    </ligand>
</feature>
<feature type="binding site" evidence="1">
    <location>
        <position position="305"/>
    </location>
    <ligand>
        <name>UDP-N-acetyl-alpha-D-glucosamine</name>
        <dbReference type="ChEBI" id="CHEBI:57705"/>
    </ligand>
</feature>
<feature type="binding site" evidence="1">
    <location>
        <position position="327"/>
    </location>
    <ligand>
        <name>UDP-N-acetyl-alpha-D-glucosamine</name>
        <dbReference type="ChEBI" id="CHEBI:57705"/>
    </ligand>
</feature>
<feature type="modified residue" description="2-(S-cysteinyl)pyruvic acid O-phosphothioketal" evidence="1">
    <location>
        <position position="117"/>
    </location>
</feature>
<organism>
    <name type="scientific">Acidithiobacillus ferrooxidans (strain ATCC 23270 / DSM 14882 / CIP 104768 / NCIMB 8455)</name>
    <name type="common">Ferrobacillus ferrooxidans (strain ATCC 23270)</name>
    <dbReference type="NCBI Taxonomy" id="243159"/>
    <lineage>
        <taxon>Bacteria</taxon>
        <taxon>Pseudomonadati</taxon>
        <taxon>Pseudomonadota</taxon>
        <taxon>Acidithiobacillia</taxon>
        <taxon>Acidithiobacillales</taxon>
        <taxon>Acidithiobacillaceae</taxon>
        <taxon>Acidithiobacillus</taxon>
    </lineage>
</organism>
<name>MURA_ACIF2</name>
<reference key="1">
    <citation type="journal article" date="2008" name="BMC Genomics">
        <title>Acidithiobacillus ferrooxidans metabolism: from genome sequence to industrial applications.</title>
        <authorList>
            <person name="Valdes J."/>
            <person name="Pedroso I."/>
            <person name="Quatrini R."/>
            <person name="Dodson R.J."/>
            <person name="Tettelin H."/>
            <person name="Blake R. II"/>
            <person name="Eisen J.A."/>
            <person name="Holmes D.S."/>
        </authorList>
    </citation>
    <scope>NUCLEOTIDE SEQUENCE [LARGE SCALE GENOMIC DNA]</scope>
    <source>
        <strain>ATCC 23270 / DSM 14882 / CIP 104768 / NCIMB 8455</strain>
    </source>
</reference>
<comment type="function">
    <text evidence="1">Cell wall formation. Adds enolpyruvyl to UDP-N-acetylglucosamine.</text>
</comment>
<comment type="catalytic activity">
    <reaction evidence="1">
        <text>phosphoenolpyruvate + UDP-N-acetyl-alpha-D-glucosamine = UDP-N-acetyl-3-O-(1-carboxyvinyl)-alpha-D-glucosamine + phosphate</text>
        <dbReference type="Rhea" id="RHEA:18681"/>
        <dbReference type="ChEBI" id="CHEBI:43474"/>
        <dbReference type="ChEBI" id="CHEBI:57705"/>
        <dbReference type="ChEBI" id="CHEBI:58702"/>
        <dbReference type="ChEBI" id="CHEBI:68483"/>
        <dbReference type="EC" id="2.5.1.7"/>
    </reaction>
</comment>
<comment type="pathway">
    <text evidence="1">Cell wall biogenesis; peptidoglycan biosynthesis.</text>
</comment>
<comment type="subcellular location">
    <subcellularLocation>
        <location evidence="1">Cytoplasm</location>
    </subcellularLocation>
</comment>
<comment type="similarity">
    <text evidence="1">Belongs to the EPSP synthase family. MurA subfamily.</text>
</comment>
<protein>
    <recommendedName>
        <fullName evidence="1">UDP-N-acetylglucosamine 1-carboxyvinyltransferase</fullName>
        <ecNumber evidence="1">2.5.1.7</ecNumber>
    </recommendedName>
    <alternativeName>
        <fullName evidence="1">Enoylpyruvate transferase</fullName>
    </alternativeName>
    <alternativeName>
        <fullName evidence="1">UDP-N-acetylglucosamine enolpyruvyl transferase</fullName>
        <shortName evidence="1">EPT</shortName>
    </alternativeName>
</protein>